<sequence>MNRVPVTTSSRTYDVLIGHEILRDAGKHIRVVLPKAKRAFVITSAPVRKHWAGIVTDALTAEGFEVIFLEMEDGERAKNMASVEDLALKMMAKGADRQSIICALGGGVVGDVAGFVASVFMRGIPVIQMPTTFLAQVDSSIGGKTGVNLKAGKNLVGTFYQPWLVLADPGVFSTLPEREFRSGLYESLKCGVIRRPDLFDRMERDRQRIVERDPGLIEWLITESVRVKADVVGADEHESGERRILNFGHTIGHALEAETAYKYFLHGEAVAWGMIAVTMIAAGLQRTDSATAQRIISLCLAYAPLPKIEVNAKKTANRVKGDKKTVHGVTHFILPREIGKVEVAIDVTDRAVVQAIEELKYLSFVG</sequence>
<organism>
    <name type="scientific">Koribacter versatilis (strain Ellin345)</name>
    <dbReference type="NCBI Taxonomy" id="204669"/>
    <lineage>
        <taxon>Bacteria</taxon>
        <taxon>Pseudomonadati</taxon>
        <taxon>Acidobacteriota</taxon>
        <taxon>Terriglobia</taxon>
        <taxon>Terriglobales</taxon>
        <taxon>Candidatus Korobacteraceae</taxon>
        <taxon>Candidatus Korobacter</taxon>
    </lineage>
</organism>
<feature type="chain" id="PRO_1000094439" description="3-dehydroquinate synthase">
    <location>
        <begin position="1"/>
        <end position="366"/>
    </location>
</feature>
<feature type="binding site" evidence="1">
    <location>
        <begin position="73"/>
        <end position="78"/>
    </location>
    <ligand>
        <name>NAD(+)</name>
        <dbReference type="ChEBI" id="CHEBI:57540"/>
    </ligand>
</feature>
<feature type="binding site" evidence="1">
    <location>
        <begin position="107"/>
        <end position="111"/>
    </location>
    <ligand>
        <name>NAD(+)</name>
        <dbReference type="ChEBI" id="CHEBI:57540"/>
    </ligand>
</feature>
<feature type="binding site" evidence="1">
    <location>
        <begin position="131"/>
        <end position="132"/>
    </location>
    <ligand>
        <name>NAD(+)</name>
        <dbReference type="ChEBI" id="CHEBI:57540"/>
    </ligand>
</feature>
<feature type="binding site" evidence="1">
    <location>
        <position position="144"/>
    </location>
    <ligand>
        <name>NAD(+)</name>
        <dbReference type="ChEBI" id="CHEBI:57540"/>
    </ligand>
</feature>
<feature type="binding site" evidence="1">
    <location>
        <position position="153"/>
    </location>
    <ligand>
        <name>NAD(+)</name>
        <dbReference type="ChEBI" id="CHEBI:57540"/>
    </ligand>
</feature>
<feature type="binding site" evidence="1">
    <location>
        <position position="186"/>
    </location>
    <ligand>
        <name>Zn(2+)</name>
        <dbReference type="ChEBI" id="CHEBI:29105"/>
    </ligand>
</feature>
<feature type="binding site" evidence="1">
    <location>
        <position position="249"/>
    </location>
    <ligand>
        <name>Zn(2+)</name>
        <dbReference type="ChEBI" id="CHEBI:29105"/>
    </ligand>
</feature>
<feature type="binding site" evidence="1">
    <location>
        <position position="266"/>
    </location>
    <ligand>
        <name>Zn(2+)</name>
        <dbReference type="ChEBI" id="CHEBI:29105"/>
    </ligand>
</feature>
<dbReference type="EC" id="4.2.3.4" evidence="1"/>
<dbReference type="EMBL" id="CP000360">
    <property type="protein sequence ID" value="ABF41250.1"/>
    <property type="molecule type" value="Genomic_DNA"/>
</dbReference>
<dbReference type="RefSeq" id="WP_011523051.1">
    <property type="nucleotide sequence ID" value="NC_008009.1"/>
</dbReference>
<dbReference type="SMR" id="Q1IPF0"/>
<dbReference type="STRING" id="204669.Acid345_2249"/>
<dbReference type="EnsemblBacteria" id="ABF41250">
    <property type="protein sequence ID" value="ABF41250"/>
    <property type="gene ID" value="Acid345_2249"/>
</dbReference>
<dbReference type="KEGG" id="aba:Acid345_2249"/>
<dbReference type="eggNOG" id="COG0337">
    <property type="taxonomic scope" value="Bacteria"/>
</dbReference>
<dbReference type="HOGENOM" id="CLU_001201_0_2_0"/>
<dbReference type="UniPathway" id="UPA00053">
    <property type="reaction ID" value="UER00085"/>
</dbReference>
<dbReference type="Proteomes" id="UP000002432">
    <property type="component" value="Chromosome"/>
</dbReference>
<dbReference type="GO" id="GO:0005737">
    <property type="term" value="C:cytoplasm"/>
    <property type="evidence" value="ECO:0007669"/>
    <property type="project" value="UniProtKB-SubCell"/>
</dbReference>
<dbReference type="GO" id="GO:0003856">
    <property type="term" value="F:3-dehydroquinate synthase activity"/>
    <property type="evidence" value="ECO:0007669"/>
    <property type="project" value="UniProtKB-UniRule"/>
</dbReference>
<dbReference type="GO" id="GO:0046872">
    <property type="term" value="F:metal ion binding"/>
    <property type="evidence" value="ECO:0007669"/>
    <property type="project" value="UniProtKB-KW"/>
</dbReference>
<dbReference type="GO" id="GO:0000166">
    <property type="term" value="F:nucleotide binding"/>
    <property type="evidence" value="ECO:0007669"/>
    <property type="project" value="UniProtKB-KW"/>
</dbReference>
<dbReference type="GO" id="GO:0008652">
    <property type="term" value="P:amino acid biosynthetic process"/>
    <property type="evidence" value="ECO:0007669"/>
    <property type="project" value="UniProtKB-KW"/>
</dbReference>
<dbReference type="GO" id="GO:0009073">
    <property type="term" value="P:aromatic amino acid family biosynthetic process"/>
    <property type="evidence" value="ECO:0007669"/>
    <property type="project" value="UniProtKB-KW"/>
</dbReference>
<dbReference type="GO" id="GO:0009423">
    <property type="term" value="P:chorismate biosynthetic process"/>
    <property type="evidence" value="ECO:0007669"/>
    <property type="project" value="UniProtKB-UniRule"/>
</dbReference>
<dbReference type="CDD" id="cd08195">
    <property type="entry name" value="DHQS"/>
    <property type="match status" value="1"/>
</dbReference>
<dbReference type="FunFam" id="3.40.50.1970:FF:000007">
    <property type="entry name" value="Pentafunctional AROM polypeptide"/>
    <property type="match status" value="1"/>
</dbReference>
<dbReference type="Gene3D" id="3.40.50.1970">
    <property type="match status" value="1"/>
</dbReference>
<dbReference type="Gene3D" id="1.20.1090.10">
    <property type="entry name" value="Dehydroquinate synthase-like - alpha domain"/>
    <property type="match status" value="1"/>
</dbReference>
<dbReference type="HAMAP" id="MF_00110">
    <property type="entry name" value="DHQ_synthase"/>
    <property type="match status" value="1"/>
</dbReference>
<dbReference type="InterPro" id="IPR050071">
    <property type="entry name" value="Dehydroquinate_synthase"/>
</dbReference>
<dbReference type="InterPro" id="IPR016037">
    <property type="entry name" value="DHQ_synth_AroB"/>
</dbReference>
<dbReference type="InterPro" id="IPR030963">
    <property type="entry name" value="DHQ_synth_fam"/>
</dbReference>
<dbReference type="InterPro" id="IPR030960">
    <property type="entry name" value="DHQS/DOIS_N"/>
</dbReference>
<dbReference type="InterPro" id="IPR056179">
    <property type="entry name" value="DHQS_C"/>
</dbReference>
<dbReference type="NCBIfam" id="TIGR01357">
    <property type="entry name" value="aroB"/>
    <property type="match status" value="1"/>
</dbReference>
<dbReference type="PANTHER" id="PTHR43622">
    <property type="entry name" value="3-DEHYDROQUINATE SYNTHASE"/>
    <property type="match status" value="1"/>
</dbReference>
<dbReference type="PANTHER" id="PTHR43622:SF7">
    <property type="entry name" value="3-DEHYDROQUINATE SYNTHASE, CHLOROPLASTIC"/>
    <property type="match status" value="1"/>
</dbReference>
<dbReference type="Pfam" id="PF01761">
    <property type="entry name" value="DHQ_synthase"/>
    <property type="match status" value="1"/>
</dbReference>
<dbReference type="Pfam" id="PF24621">
    <property type="entry name" value="DHQS_C"/>
    <property type="match status" value="1"/>
</dbReference>
<dbReference type="PIRSF" id="PIRSF001455">
    <property type="entry name" value="DHQ_synth"/>
    <property type="match status" value="1"/>
</dbReference>
<dbReference type="SUPFAM" id="SSF56796">
    <property type="entry name" value="Dehydroquinate synthase-like"/>
    <property type="match status" value="1"/>
</dbReference>
<evidence type="ECO:0000255" key="1">
    <source>
        <dbReference type="HAMAP-Rule" id="MF_00110"/>
    </source>
</evidence>
<accession>Q1IPF0</accession>
<protein>
    <recommendedName>
        <fullName evidence="1">3-dehydroquinate synthase</fullName>
        <shortName evidence="1">DHQS</shortName>
        <ecNumber evidence="1">4.2.3.4</ecNumber>
    </recommendedName>
</protein>
<comment type="function">
    <text evidence="1">Catalyzes the conversion of 3-deoxy-D-arabino-heptulosonate 7-phosphate (DAHP) to dehydroquinate (DHQ).</text>
</comment>
<comment type="catalytic activity">
    <reaction evidence="1">
        <text>7-phospho-2-dehydro-3-deoxy-D-arabino-heptonate = 3-dehydroquinate + phosphate</text>
        <dbReference type="Rhea" id="RHEA:21968"/>
        <dbReference type="ChEBI" id="CHEBI:32364"/>
        <dbReference type="ChEBI" id="CHEBI:43474"/>
        <dbReference type="ChEBI" id="CHEBI:58394"/>
        <dbReference type="EC" id="4.2.3.4"/>
    </reaction>
</comment>
<comment type="cofactor">
    <cofactor evidence="1">
        <name>Co(2+)</name>
        <dbReference type="ChEBI" id="CHEBI:48828"/>
    </cofactor>
    <cofactor evidence="1">
        <name>Zn(2+)</name>
        <dbReference type="ChEBI" id="CHEBI:29105"/>
    </cofactor>
    <text evidence="1">Binds 1 divalent metal cation per subunit. Can use either Co(2+) or Zn(2+).</text>
</comment>
<comment type="cofactor">
    <cofactor evidence="1">
        <name>NAD(+)</name>
        <dbReference type="ChEBI" id="CHEBI:57540"/>
    </cofactor>
</comment>
<comment type="pathway">
    <text evidence="1">Metabolic intermediate biosynthesis; chorismate biosynthesis; chorismate from D-erythrose 4-phosphate and phosphoenolpyruvate: step 2/7.</text>
</comment>
<comment type="subcellular location">
    <subcellularLocation>
        <location evidence="1">Cytoplasm</location>
    </subcellularLocation>
</comment>
<comment type="similarity">
    <text evidence="1">Belongs to the sugar phosphate cyclases superfamily. Dehydroquinate synthase family.</text>
</comment>
<name>AROB_KORVE</name>
<gene>
    <name evidence="1" type="primary">aroB</name>
    <name type="ordered locus">Acid345_2249</name>
</gene>
<proteinExistence type="inferred from homology"/>
<keyword id="KW-0028">Amino-acid biosynthesis</keyword>
<keyword id="KW-0057">Aromatic amino acid biosynthesis</keyword>
<keyword id="KW-0170">Cobalt</keyword>
<keyword id="KW-0963">Cytoplasm</keyword>
<keyword id="KW-0456">Lyase</keyword>
<keyword id="KW-0479">Metal-binding</keyword>
<keyword id="KW-0520">NAD</keyword>
<keyword id="KW-0547">Nucleotide-binding</keyword>
<keyword id="KW-1185">Reference proteome</keyword>
<keyword id="KW-0862">Zinc</keyword>
<reference key="1">
    <citation type="journal article" date="2009" name="Appl. Environ. Microbiol.">
        <title>Three genomes from the phylum Acidobacteria provide insight into the lifestyles of these microorganisms in soils.</title>
        <authorList>
            <person name="Ward N.L."/>
            <person name="Challacombe J.F."/>
            <person name="Janssen P.H."/>
            <person name="Henrissat B."/>
            <person name="Coutinho P.M."/>
            <person name="Wu M."/>
            <person name="Xie G."/>
            <person name="Haft D.H."/>
            <person name="Sait M."/>
            <person name="Badger J."/>
            <person name="Barabote R.D."/>
            <person name="Bradley B."/>
            <person name="Brettin T.S."/>
            <person name="Brinkac L.M."/>
            <person name="Bruce D."/>
            <person name="Creasy T."/>
            <person name="Daugherty S.C."/>
            <person name="Davidsen T.M."/>
            <person name="DeBoy R.T."/>
            <person name="Detter J.C."/>
            <person name="Dodson R.J."/>
            <person name="Durkin A.S."/>
            <person name="Ganapathy A."/>
            <person name="Gwinn-Giglio M."/>
            <person name="Han C.S."/>
            <person name="Khouri H."/>
            <person name="Kiss H."/>
            <person name="Kothari S.P."/>
            <person name="Madupu R."/>
            <person name="Nelson K.E."/>
            <person name="Nelson W.C."/>
            <person name="Paulsen I."/>
            <person name="Penn K."/>
            <person name="Ren Q."/>
            <person name="Rosovitz M.J."/>
            <person name="Selengut J.D."/>
            <person name="Shrivastava S."/>
            <person name="Sullivan S.A."/>
            <person name="Tapia R."/>
            <person name="Thompson L.S."/>
            <person name="Watkins K.L."/>
            <person name="Yang Q."/>
            <person name="Yu C."/>
            <person name="Zafar N."/>
            <person name="Zhou L."/>
            <person name="Kuske C.R."/>
        </authorList>
    </citation>
    <scope>NUCLEOTIDE SEQUENCE [LARGE SCALE GENOMIC DNA]</scope>
    <source>
        <strain>Ellin345</strain>
    </source>
</reference>